<name>GLMM_POLNA</name>
<proteinExistence type="inferred from homology"/>
<protein>
    <recommendedName>
        <fullName evidence="1">Phosphoglucosamine mutase</fullName>
        <ecNumber evidence="1">5.4.2.10</ecNumber>
    </recommendedName>
</protein>
<reference key="1">
    <citation type="journal article" date="2009" name="Environ. Microbiol.">
        <title>The genome of Polaromonas naphthalenivorans strain CJ2, isolated from coal tar-contaminated sediment, reveals physiological and metabolic versatility and evolution through extensive horizontal gene transfer.</title>
        <authorList>
            <person name="Yagi J.M."/>
            <person name="Sims D."/>
            <person name="Brettin T."/>
            <person name="Bruce D."/>
            <person name="Madsen E.L."/>
        </authorList>
    </citation>
    <scope>NUCLEOTIDE SEQUENCE [LARGE SCALE GENOMIC DNA]</scope>
    <source>
        <strain>CJ2</strain>
    </source>
</reference>
<organism>
    <name type="scientific">Polaromonas naphthalenivorans (strain CJ2)</name>
    <dbReference type="NCBI Taxonomy" id="365044"/>
    <lineage>
        <taxon>Bacteria</taxon>
        <taxon>Pseudomonadati</taxon>
        <taxon>Pseudomonadota</taxon>
        <taxon>Betaproteobacteria</taxon>
        <taxon>Burkholderiales</taxon>
        <taxon>Comamonadaceae</taxon>
        <taxon>Polaromonas</taxon>
    </lineage>
</organism>
<accession>A1VQI3</accession>
<keyword id="KW-0413">Isomerase</keyword>
<keyword id="KW-0460">Magnesium</keyword>
<keyword id="KW-0479">Metal-binding</keyword>
<keyword id="KW-0597">Phosphoprotein</keyword>
<keyword id="KW-1185">Reference proteome</keyword>
<evidence type="ECO:0000255" key="1">
    <source>
        <dbReference type="HAMAP-Rule" id="MF_01554"/>
    </source>
</evidence>
<dbReference type="EC" id="5.4.2.10" evidence="1"/>
<dbReference type="EMBL" id="CP000529">
    <property type="protein sequence ID" value="ABM37911.1"/>
    <property type="molecule type" value="Genomic_DNA"/>
</dbReference>
<dbReference type="RefSeq" id="WP_011801988.1">
    <property type="nucleotide sequence ID" value="NC_008781.1"/>
</dbReference>
<dbReference type="SMR" id="A1VQI3"/>
<dbReference type="STRING" id="365044.Pnap_2609"/>
<dbReference type="KEGG" id="pna:Pnap_2609"/>
<dbReference type="eggNOG" id="COG1109">
    <property type="taxonomic scope" value="Bacteria"/>
</dbReference>
<dbReference type="HOGENOM" id="CLU_016950_7_0_4"/>
<dbReference type="OrthoDB" id="9803322at2"/>
<dbReference type="Proteomes" id="UP000000644">
    <property type="component" value="Chromosome"/>
</dbReference>
<dbReference type="GO" id="GO:0005829">
    <property type="term" value="C:cytosol"/>
    <property type="evidence" value="ECO:0007669"/>
    <property type="project" value="TreeGrafter"/>
</dbReference>
<dbReference type="GO" id="GO:0000287">
    <property type="term" value="F:magnesium ion binding"/>
    <property type="evidence" value="ECO:0007669"/>
    <property type="project" value="UniProtKB-UniRule"/>
</dbReference>
<dbReference type="GO" id="GO:0008966">
    <property type="term" value="F:phosphoglucosamine mutase activity"/>
    <property type="evidence" value="ECO:0007669"/>
    <property type="project" value="UniProtKB-UniRule"/>
</dbReference>
<dbReference type="GO" id="GO:0004615">
    <property type="term" value="F:phosphomannomutase activity"/>
    <property type="evidence" value="ECO:0007669"/>
    <property type="project" value="TreeGrafter"/>
</dbReference>
<dbReference type="GO" id="GO:0005975">
    <property type="term" value="P:carbohydrate metabolic process"/>
    <property type="evidence" value="ECO:0007669"/>
    <property type="project" value="InterPro"/>
</dbReference>
<dbReference type="GO" id="GO:0009252">
    <property type="term" value="P:peptidoglycan biosynthetic process"/>
    <property type="evidence" value="ECO:0007669"/>
    <property type="project" value="TreeGrafter"/>
</dbReference>
<dbReference type="GO" id="GO:0006048">
    <property type="term" value="P:UDP-N-acetylglucosamine biosynthetic process"/>
    <property type="evidence" value="ECO:0007669"/>
    <property type="project" value="TreeGrafter"/>
</dbReference>
<dbReference type="CDD" id="cd05802">
    <property type="entry name" value="GlmM"/>
    <property type="match status" value="1"/>
</dbReference>
<dbReference type="FunFam" id="3.30.310.50:FF:000001">
    <property type="entry name" value="Phosphoglucosamine mutase"/>
    <property type="match status" value="1"/>
</dbReference>
<dbReference type="FunFam" id="3.40.120.10:FF:000001">
    <property type="entry name" value="Phosphoglucosamine mutase"/>
    <property type="match status" value="1"/>
</dbReference>
<dbReference type="FunFam" id="3.40.120.10:FF:000003">
    <property type="entry name" value="Phosphoglucosamine mutase"/>
    <property type="match status" value="1"/>
</dbReference>
<dbReference type="Gene3D" id="3.40.120.10">
    <property type="entry name" value="Alpha-D-Glucose-1,6-Bisphosphate, subunit A, domain 3"/>
    <property type="match status" value="3"/>
</dbReference>
<dbReference type="Gene3D" id="3.30.310.50">
    <property type="entry name" value="Alpha-D-phosphohexomutase, C-terminal domain"/>
    <property type="match status" value="1"/>
</dbReference>
<dbReference type="HAMAP" id="MF_01554_B">
    <property type="entry name" value="GlmM_B"/>
    <property type="match status" value="1"/>
</dbReference>
<dbReference type="InterPro" id="IPR005844">
    <property type="entry name" value="A-D-PHexomutase_a/b/a-I"/>
</dbReference>
<dbReference type="InterPro" id="IPR016055">
    <property type="entry name" value="A-D-PHexomutase_a/b/a-I/II/III"/>
</dbReference>
<dbReference type="InterPro" id="IPR005845">
    <property type="entry name" value="A-D-PHexomutase_a/b/a-II"/>
</dbReference>
<dbReference type="InterPro" id="IPR005846">
    <property type="entry name" value="A-D-PHexomutase_a/b/a-III"/>
</dbReference>
<dbReference type="InterPro" id="IPR005843">
    <property type="entry name" value="A-D-PHexomutase_C"/>
</dbReference>
<dbReference type="InterPro" id="IPR036900">
    <property type="entry name" value="A-D-PHexomutase_C_sf"/>
</dbReference>
<dbReference type="InterPro" id="IPR016066">
    <property type="entry name" value="A-D-PHexomutase_CS"/>
</dbReference>
<dbReference type="InterPro" id="IPR005841">
    <property type="entry name" value="Alpha-D-phosphohexomutase_SF"/>
</dbReference>
<dbReference type="InterPro" id="IPR006352">
    <property type="entry name" value="GlmM_bact"/>
</dbReference>
<dbReference type="InterPro" id="IPR050060">
    <property type="entry name" value="Phosphoglucosamine_mutase"/>
</dbReference>
<dbReference type="NCBIfam" id="TIGR01455">
    <property type="entry name" value="glmM"/>
    <property type="match status" value="1"/>
</dbReference>
<dbReference type="NCBIfam" id="NF008139">
    <property type="entry name" value="PRK10887.1"/>
    <property type="match status" value="1"/>
</dbReference>
<dbReference type="PANTHER" id="PTHR42946:SF1">
    <property type="entry name" value="PHOSPHOGLUCOMUTASE (ALPHA-D-GLUCOSE-1,6-BISPHOSPHATE-DEPENDENT)"/>
    <property type="match status" value="1"/>
</dbReference>
<dbReference type="PANTHER" id="PTHR42946">
    <property type="entry name" value="PHOSPHOHEXOSE MUTASE"/>
    <property type="match status" value="1"/>
</dbReference>
<dbReference type="Pfam" id="PF02878">
    <property type="entry name" value="PGM_PMM_I"/>
    <property type="match status" value="1"/>
</dbReference>
<dbReference type="Pfam" id="PF02879">
    <property type="entry name" value="PGM_PMM_II"/>
    <property type="match status" value="1"/>
</dbReference>
<dbReference type="Pfam" id="PF02880">
    <property type="entry name" value="PGM_PMM_III"/>
    <property type="match status" value="1"/>
</dbReference>
<dbReference type="Pfam" id="PF00408">
    <property type="entry name" value="PGM_PMM_IV"/>
    <property type="match status" value="1"/>
</dbReference>
<dbReference type="PRINTS" id="PR00509">
    <property type="entry name" value="PGMPMM"/>
</dbReference>
<dbReference type="SUPFAM" id="SSF55957">
    <property type="entry name" value="Phosphoglucomutase, C-terminal domain"/>
    <property type="match status" value="1"/>
</dbReference>
<dbReference type="SUPFAM" id="SSF53738">
    <property type="entry name" value="Phosphoglucomutase, first 3 domains"/>
    <property type="match status" value="3"/>
</dbReference>
<dbReference type="PROSITE" id="PS00710">
    <property type="entry name" value="PGM_PMM"/>
    <property type="match status" value="1"/>
</dbReference>
<feature type="chain" id="PRO_0000301353" description="Phosphoglucosamine mutase">
    <location>
        <begin position="1"/>
        <end position="443"/>
    </location>
</feature>
<feature type="active site" description="Phosphoserine intermediate" evidence="1">
    <location>
        <position position="102"/>
    </location>
</feature>
<feature type="binding site" description="via phosphate group" evidence="1">
    <location>
        <position position="102"/>
    </location>
    <ligand>
        <name>Mg(2+)</name>
        <dbReference type="ChEBI" id="CHEBI:18420"/>
    </ligand>
</feature>
<feature type="binding site" evidence="1">
    <location>
        <position position="241"/>
    </location>
    <ligand>
        <name>Mg(2+)</name>
        <dbReference type="ChEBI" id="CHEBI:18420"/>
    </ligand>
</feature>
<feature type="binding site" evidence="1">
    <location>
        <position position="243"/>
    </location>
    <ligand>
        <name>Mg(2+)</name>
        <dbReference type="ChEBI" id="CHEBI:18420"/>
    </ligand>
</feature>
<feature type="binding site" evidence="1">
    <location>
        <position position="245"/>
    </location>
    <ligand>
        <name>Mg(2+)</name>
        <dbReference type="ChEBI" id="CHEBI:18420"/>
    </ligand>
</feature>
<feature type="modified residue" description="Phosphoserine" evidence="1">
    <location>
        <position position="102"/>
    </location>
</feature>
<sequence>MNRKYFGTDGIRGTVGEAPITPDFVLRLAHAVGRVLRRTEARPTVLIGKDTRISGYMLESALESGFNSAGVDVVLLGPLPTPGVAYLTRAQRASLGVVISASHNPFADNGIKFFSAQGNKLNDEWEFEVEATLKEEPVWADSASLGKTRRLDDAAGRYIEFCKSTFAHDLTLKGLKIVVDGAHGAAYQIAPMVFHELGAEVIAIGCAPDGLNINDGVGATHPQALVNAVLANKADYGIALDGDADRLQMVDAQGRLFNGDEVLYLMVNERLSRGEKVPGTVGTLMTNMAVEVALKAKGVEFVRAKVGDRYILEELERRGWLLGGEGSGHMLALDKHTTGDGLISALQVLQACARSNQTLAQLLSEVVLFPQTLINVRLKPGQDWKNSAELAAQTKAAEIELGDSGRILIRASGTEPLLRVMVEARDAEQARACAERVADAVRS</sequence>
<comment type="function">
    <text evidence="1">Catalyzes the conversion of glucosamine-6-phosphate to glucosamine-1-phosphate.</text>
</comment>
<comment type="catalytic activity">
    <reaction evidence="1">
        <text>alpha-D-glucosamine 1-phosphate = D-glucosamine 6-phosphate</text>
        <dbReference type="Rhea" id="RHEA:23424"/>
        <dbReference type="ChEBI" id="CHEBI:58516"/>
        <dbReference type="ChEBI" id="CHEBI:58725"/>
        <dbReference type="EC" id="5.4.2.10"/>
    </reaction>
</comment>
<comment type="cofactor">
    <cofactor evidence="1">
        <name>Mg(2+)</name>
        <dbReference type="ChEBI" id="CHEBI:18420"/>
    </cofactor>
    <text evidence="1">Binds 1 Mg(2+) ion per subunit.</text>
</comment>
<comment type="PTM">
    <text evidence="1">Activated by phosphorylation.</text>
</comment>
<comment type="similarity">
    <text evidence="1">Belongs to the phosphohexose mutase family.</text>
</comment>
<gene>
    <name evidence="1" type="primary">glmM</name>
    <name type="ordered locus">Pnap_2609</name>
</gene>